<name>LTXA_AGGAC</name>
<reference key="1">
    <citation type="journal article" date="1989" name="J. Biol. Chem.">
        <title>Analysis of the Actinobacillus actinomycetemcomitans leukotoxin gene. Delineation of unique features and comparison to homologous toxins.</title>
        <authorList>
            <person name="Lally E.T."/>
            <person name="Golub E.E."/>
            <person name="Kieba I.R."/>
            <person name="Taichman N.S."/>
            <person name="Rosenbloom J."/>
            <person name="Rosenbloom J.C."/>
            <person name="Gibson C.W."/>
            <person name="Demuth D.R."/>
        </authorList>
    </citation>
    <scope>NUCLEOTIDE SEQUENCE [GENOMIC DNA]</scope>
    <source>
        <strain>JP2</strain>
    </source>
</reference>
<reference key="2">
    <citation type="journal article" date="1990" name="Infect. Immun.">
        <title>Nucleotide sequence of the leukotoxin gene from Actinobacillus actinomycetemcomitans: homology to the alpha-hemolysin/leukotoxin gene family.</title>
        <authorList>
            <person name="Kraig E."/>
            <person name="Dailey T."/>
            <person name="Kolodrubetz D."/>
        </authorList>
    </citation>
    <scope>NUCLEOTIDE SEQUENCE [GENOMIC DNA]</scope>
    <source>
        <strain>JP2</strain>
    </source>
</reference>
<reference key="3">
    <citation type="journal article" date="1988" name="Infect. Immun.">
        <title>Killing of human myelomonocytic leukemia and lymphocytic cell lines by Actinobacillus actinomycetemcomitans leukotoxin.</title>
        <authorList>
            <person name="Simpson D.L."/>
            <person name="Berthold P."/>
            <person name="Taichman N.S."/>
        </authorList>
    </citation>
    <scope>FUNCTION</scope>
</reference>
<reference key="4">
    <citation type="journal article" date="1991" name="Infect. Immun.">
        <title>Nuclease-sensitive binding of an Actinobacillus actinomycetemcomitans leukotoxin to the bacterial cell surface.</title>
        <authorList>
            <person name="Ohta H."/>
            <person name="Kato K."/>
            <person name="Kokeguchi S."/>
            <person name="Hara H."/>
            <person name="Fukui K."/>
            <person name="Murayama Y."/>
        </authorList>
    </citation>
    <scope>SUBCELLULAR LOCATION</scope>
    <source>
        <strain>301-b / Serotype a</strain>
    </source>
</reference>
<reference key="5">
    <citation type="journal article" date="1994" name="Infect. Immun.">
        <title>Regulation of Actinobacillus actinomycetemcomitans leukotoxin expression: analysis of the promoter regions of leukotoxic and minimally leukotoxic strains.</title>
        <authorList>
            <person name="Brogan J.M."/>
            <person name="Lally E.T."/>
            <person name="Poulsen K."/>
            <person name="Kilian M."/>
            <person name="Demuth D.R."/>
        </authorList>
    </citation>
    <scope>INDUCTION</scope>
    <scope>GENE NAME</scope>
    <source>
        <strain>652</strain>
        <strain>JP2</strain>
    </source>
</reference>
<reference key="6">
    <citation type="journal article" date="2000" name="Infect. Immun.">
        <title>Secretion of RTX leukotoxin by Actinobacillus actinomycetemcomitans.</title>
        <authorList>
            <person name="Kachlany S.C."/>
            <person name="Fine D.H."/>
            <person name="Figurski D.H."/>
        </authorList>
    </citation>
    <scope>SUBCELLULAR LOCATION</scope>
</reference>
<reference key="7">
    <citation type="journal article" date="2006" name="Infect. Immun.">
        <title>Leukotoxin confers beta-hemolytic activity to Actinobacillus actinomycetemcomitans.</title>
        <authorList>
            <person name="Balashova N.V."/>
            <person name="Crosby J.A."/>
            <person name="Al Ghofaily L."/>
            <person name="Kachlany S.C."/>
        </authorList>
    </citation>
    <scope>FUNCTION AS A HEMOLYSIN</scope>
    <scope>DISRUPTION PHENOTYPE</scope>
</reference>
<reference key="8">
    <citation type="journal article" date="2006" name="J. Bacteriol.">
        <title>Regulation of Aggregatibacter (Actinobacillus) actinomycetemcomitans leukotoxin secretion by iron.</title>
        <authorList>
            <person name="Balashova N.V."/>
            <person name="Diaz R."/>
            <person name="Balashov S.V."/>
            <person name="Crosby J.A."/>
            <person name="Kachlany S.C."/>
        </authorList>
    </citation>
    <scope>REGULATION BY IRON</scope>
</reference>
<reference key="9">
    <citation type="journal article" date="2007" name="Infect. Immun.">
        <title>Interaction between leukotoxin and Cu,Zn superoxide dismutase in Aggregatibacter actinomycetemcomitans.</title>
        <authorList>
            <person name="Balashova N.V."/>
            <person name="Park D.H."/>
            <person name="Patel J.K."/>
            <person name="Figurski D.H."/>
            <person name="Kachlany S.C."/>
        </authorList>
    </citation>
    <scope>INTERACTION WITH SUPEROXIDE DISMUTASE</scope>
</reference>
<reference key="10">
    <citation type="journal article" date="2007" name="Infect. Immun.">
        <title>Human CD18 is the functional receptor for Aggregatibacter actinomycetemcomitans leukotoxin.</title>
        <authorList>
            <person name="Dileepan T."/>
            <person name="Kachlany S.C."/>
            <person name="Balashova N.V."/>
            <person name="Patel J."/>
            <person name="Maheswaran S.K."/>
        </authorList>
    </citation>
    <scope>FUNCTION</scope>
    <scope>INTERACTION WITH HUMAN LFA-1</scope>
</reference>
<reference key="11">
    <citation type="journal article" date="2009" name="Gene">
        <title>Aggregatibacter actinomycetemcomitans LtxC is required for leukotoxin activity and initial interaction between toxin and host cells.</title>
        <authorList>
            <person name="Balashova N.V."/>
            <person name="Shah C."/>
            <person name="Patel J.K."/>
            <person name="Megalla S."/>
            <person name="Kachlany S.C."/>
        </authorList>
    </citation>
    <scope>ACYLATION</scope>
    <source>
        <strain>JP2N</strain>
    </source>
</reference>
<reference key="12">
    <citation type="journal article" date="2011" name="Mol. Oral. Microbiol.">
        <title>Aggregatibacter actinomycetemcomitans leukotoxin is post-translationally modified by addition of either saturated or hydroxylated fatty acyl chains.</title>
        <authorList>
            <person name="Fong K.P."/>
            <person name="Tang H.Y."/>
            <person name="Brown A.C."/>
            <person name="Kieba I.R."/>
            <person name="Speicher D.W."/>
            <person name="Boesze-Battaglia K."/>
            <person name="Lally E.T."/>
        </authorList>
    </citation>
    <scope>ACYLATION</scope>
    <scope>MUTAGENESIS OF LYS-562 AND LYS-687</scope>
</reference>
<reference key="13">
    <citation type="journal article" date="2013" name="J. Biol. Chem.">
        <title>Aggregatibacter actinomycetemcomitans leukotoxin utilizes a cholesterol recognition/amino acid consensus site for membrane association.</title>
        <authorList>
            <person name="Brown A.C."/>
            <person name="Balashova N.V."/>
            <person name="Epand R.M."/>
            <person name="Epand R.F."/>
            <person name="Bragin A."/>
            <person name="Kachlany S.C."/>
            <person name="Walters M.J."/>
            <person name="Du Y."/>
            <person name="Boesze-Battaglia K."/>
            <person name="Lally E.T."/>
        </authorList>
    </citation>
    <scope>FUNCTION</scope>
    <scope>BINDING TO CHOLESTEROL</scope>
    <scope>MUTAGENESIS OF TYR-337 AND TYR-504</scope>
</reference>
<sequence>MATTTLPNTKQQAAQFANSVADRAKENIDAAKEQLQKALDKLGKTGKKLTLYIPKNYKKGNGLTALIKAAQKLGIEVYHEGKDGPALTNGILNTGKKLLGLTERGLTLFAPELDKWIQGNKHLSNSVGSTGNLTKAIDKVQSVLGTLQAFLNTAFSGMDLDALIKARQNGKNVTDVQLAKASLNLINELIGTISSITNNVDTFSKQLNKLGEALGQVKHFGSFGDKLKNLPKLGNLGKGLGALSGVLSAISAALLLANKDADTATKAAAAAELTNKVLGNIGKAITQYLIAQRAAAGLSTTGPVAGLIASVVSLAISPLSFLGIAKQFDRARMLEEYSKRFKKFGYNGDSLLGQFYKNTGIADAAITTINTVLSAIAAGVGAASAGSLVGAPIGLLVSAITSLISGILDASKQAVFEHIANQLADKIKAWENKYGKNYFENGYDARHSAFLEDSLKLFNELREKYKTENILSITQQGWDQRIGELAGITRNGDRIQSGKAYVDYLKKGEELAKHSDKFTKQILDPIKGNIDLSGIKGSTTLTFLNPLLTAGKEERKTRQSGKYEFITELKVKGRTDWKVKGVPNSNGVYDFSNLIQHAVTRDNKVLEARLIANLGAKDDYVFVGSGSTIVNAGDGYDVVDYSKGRTGALTIDGRNATKAGQYKVERDLSGTQVLQETVSKQETKRGKVTDLLEYRNYKLDYYYTNKGFKAHDELNSVEEIIGSTLRDKFYGSKFNDVFHGHDGDDLIYGYDGDDRLYGDNGNDEIHGGQGNDKLYGGAGNDRLFGEYGNNYLDGGEGDDHLEGGNGSDILRGGSGNDKLFGNQGDDLLDGGEGDDQLAGGEGNDIYVYRKEYGHHTITEHSGDKDKLSLANINLKDVSFERNGNDLLLKTNNRTAVTFKGWFSKPNSSAGLDEYQRKLLEYAPEKDRARLKRQFELQRGKVDKSLNNKVEEIIGKDGERITSQDIDNLFDKSGNKKTISPQELAGLIKNKGKSSSLMSSSRSSSMLTQKSGLSNDISRIISATSGFGSSGKALSASPLQTNNNFNSYANSLATTA</sequence>
<dbReference type="EMBL" id="M27399">
    <property type="protein sequence ID" value="AAA21922.1"/>
    <property type="molecule type" value="Genomic_DNA"/>
</dbReference>
<dbReference type="EMBL" id="X16829">
    <property type="protein sequence ID" value="CAA34731.1"/>
    <property type="molecule type" value="Genomic_DNA"/>
</dbReference>
<dbReference type="PIR" id="A37205">
    <property type="entry name" value="A37205"/>
</dbReference>
<dbReference type="RefSeq" id="WP_005567703.1">
    <property type="nucleotide sequence ID" value="NZ_JABKAK010000001.1"/>
</dbReference>
<dbReference type="SMR" id="P16462"/>
<dbReference type="STRING" id="714.ACT75_09605"/>
<dbReference type="TCDB" id="1.C.11.1.7">
    <property type="family name" value="the pore-forming rtx toxin (rtx-toxin) family"/>
</dbReference>
<dbReference type="eggNOG" id="COG2931">
    <property type="taxonomic scope" value="Bacteria"/>
</dbReference>
<dbReference type="GO" id="GO:0009279">
    <property type="term" value="C:cell outer membrane"/>
    <property type="evidence" value="ECO:0007669"/>
    <property type="project" value="UniProtKB-SubCell"/>
</dbReference>
<dbReference type="GO" id="GO:0005576">
    <property type="term" value="C:extracellular region"/>
    <property type="evidence" value="ECO:0007669"/>
    <property type="project" value="UniProtKB-SubCell"/>
</dbReference>
<dbReference type="GO" id="GO:0005509">
    <property type="term" value="F:calcium ion binding"/>
    <property type="evidence" value="ECO:0007669"/>
    <property type="project" value="InterPro"/>
</dbReference>
<dbReference type="GO" id="GO:0015267">
    <property type="term" value="F:channel activity"/>
    <property type="evidence" value="ECO:0007669"/>
    <property type="project" value="InterPro"/>
</dbReference>
<dbReference type="GO" id="GO:0090729">
    <property type="term" value="F:toxin activity"/>
    <property type="evidence" value="ECO:0007669"/>
    <property type="project" value="UniProtKB-KW"/>
</dbReference>
<dbReference type="GO" id="GO:0031640">
    <property type="term" value="P:killing of cells of another organism"/>
    <property type="evidence" value="ECO:0007669"/>
    <property type="project" value="UniProtKB-KW"/>
</dbReference>
<dbReference type="Gene3D" id="2.150.10.10">
    <property type="entry name" value="Serralysin-like metalloprotease, C-terminal"/>
    <property type="match status" value="3"/>
</dbReference>
<dbReference type="InterPro" id="IPR018511">
    <property type="entry name" value="Hemolysin-typ_Ca-bd_CS"/>
</dbReference>
<dbReference type="InterPro" id="IPR001343">
    <property type="entry name" value="Hemolysn_Ca-bd"/>
</dbReference>
<dbReference type="InterPro" id="IPR018504">
    <property type="entry name" value="RTX_pore_form"/>
</dbReference>
<dbReference type="InterPro" id="IPR050557">
    <property type="entry name" value="RTX_toxin/Mannuronan_C5-epim"/>
</dbReference>
<dbReference type="InterPro" id="IPR003995">
    <property type="entry name" value="RTX_toxin_determinant-A"/>
</dbReference>
<dbReference type="InterPro" id="IPR011049">
    <property type="entry name" value="Serralysin-like_metalloprot_C"/>
</dbReference>
<dbReference type="NCBIfam" id="NF033943">
    <property type="entry name" value="RTX_toxin"/>
    <property type="match status" value="1"/>
</dbReference>
<dbReference type="PANTHER" id="PTHR38340">
    <property type="entry name" value="S-LAYER PROTEIN"/>
    <property type="match status" value="1"/>
</dbReference>
<dbReference type="PANTHER" id="PTHR38340:SF1">
    <property type="entry name" value="S-LAYER PROTEIN"/>
    <property type="match status" value="1"/>
</dbReference>
<dbReference type="Pfam" id="PF00353">
    <property type="entry name" value="HemolysinCabind"/>
    <property type="match status" value="2"/>
</dbReference>
<dbReference type="Pfam" id="PF02382">
    <property type="entry name" value="RTX"/>
    <property type="match status" value="1"/>
</dbReference>
<dbReference type="PRINTS" id="PR00313">
    <property type="entry name" value="CABNDNGRPT"/>
</dbReference>
<dbReference type="PRINTS" id="PR01488">
    <property type="entry name" value="RTXTOXINA"/>
</dbReference>
<dbReference type="SUPFAM" id="SSF51120">
    <property type="entry name" value="beta-Roll"/>
    <property type="match status" value="2"/>
</dbReference>
<dbReference type="PROSITE" id="PS00330">
    <property type="entry name" value="HEMOLYSIN_CALCIUM"/>
    <property type="match status" value="5"/>
</dbReference>
<evidence type="ECO:0000250" key="1"/>
<evidence type="ECO:0000255" key="2"/>
<evidence type="ECO:0000256" key="3">
    <source>
        <dbReference type="SAM" id="MobiDB-lite"/>
    </source>
</evidence>
<evidence type="ECO:0000269" key="4">
    <source>
    </source>
</evidence>
<evidence type="ECO:0000269" key="5">
    <source>
    </source>
</evidence>
<evidence type="ECO:0000269" key="6">
    <source>
    </source>
</evidence>
<evidence type="ECO:0000269" key="7">
    <source>
    </source>
</evidence>
<evidence type="ECO:0000269" key="8">
    <source>
    </source>
</evidence>
<evidence type="ECO:0000269" key="9">
    <source>
    </source>
</evidence>
<evidence type="ECO:0000269" key="10">
    <source>
    </source>
</evidence>
<evidence type="ECO:0000269" key="11">
    <source>
    </source>
</evidence>
<evidence type="ECO:0000269" key="12">
    <source>
    </source>
</evidence>
<evidence type="ECO:0000269" key="13">
    <source>
    </source>
</evidence>
<evidence type="ECO:0000269" key="14">
    <source>
    </source>
</evidence>
<evidence type="ECO:0000303" key="15">
    <source>
    </source>
</evidence>
<evidence type="ECO:0000303" key="16">
    <source>
    </source>
</evidence>
<evidence type="ECO:0000303" key="17">
    <source>
    </source>
</evidence>
<evidence type="ECO:0000305" key="18"/>
<accession>P16462</accession>
<accession>Q43892</accession>
<gene>
    <name evidence="17" type="primary">ltxA</name>
    <name evidence="16" type="synonym">AaLta</name>
    <name evidence="15" type="synonym">lktA</name>
</gene>
<feature type="chain" id="PRO_0000196216" description="Leukotoxin">
    <location>
        <begin position="1"/>
        <end position="1055"/>
    </location>
</feature>
<feature type="repeat" description="Hemolysin-type calcium-binding 1">
    <location>
        <begin position="721"/>
        <end position="738"/>
    </location>
</feature>
<feature type="repeat" description="Hemolysin-type calcium-binding 2">
    <location>
        <begin position="739"/>
        <end position="756"/>
    </location>
</feature>
<feature type="repeat" description="Hemolysin-type calcium-binding 3">
    <location>
        <begin position="757"/>
        <end position="774"/>
    </location>
</feature>
<feature type="repeat" description="Hemolysin-type calcium-binding 4">
    <location>
        <begin position="775"/>
        <end position="792"/>
    </location>
</feature>
<feature type="repeat" description="Hemolysin-type calcium-binding 5">
    <location>
        <begin position="793"/>
        <end position="810"/>
    </location>
</feature>
<feature type="repeat" description="Hemolysin-type calcium-binding 6">
    <location>
        <begin position="811"/>
        <end position="828"/>
    </location>
</feature>
<feature type="repeat" description="Hemolysin-type calcium-binding 7">
    <location>
        <begin position="829"/>
        <end position="846"/>
    </location>
</feature>
<feature type="region of interest" description="Cholesterol recognition/amino acid consensus (CRAC) region" evidence="12">
    <location>
        <begin position="334"/>
        <end position="340"/>
    </location>
</feature>
<feature type="region of interest" description="Cholesterol recognition/amino acid consensus (CRAC) region" evidence="12">
    <location>
        <begin position="502"/>
        <end position="506"/>
    </location>
</feature>
<feature type="region of interest" description="Disordered" evidence="3">
    <location>
        <begin position="795"/>
        <end position="815"/>
    </location>
</feature>
<feature type="region of interest" description="Disordered" evidence="3">
    <location>
        <begin position="990"/>
        <end position="1009"/>
    </location>
</feature>
<feature type="coiled-coil region" evidence="2">
    <location>
        <begin position="11"/>
        <end position="49"/>
    </location>
</feature>
<feature type="compositionally biased region" description="Low complexity" evidence="3">
    <location>
        <begin position="993"/>
        <end position="1006"/>
    </location>
</feature>
<feature type="mutagenesis site" description="Loss of cytotoxicity." evidence="12">
    <original>Y</original>
    <variation>P</variation>
    <location>
        <position position="337"/>
    </location>
</feature>
<feature type="mutagenesis site" description="Decreases cytotoxicity." evidence="12">
    <original>Y</original>
    <variation>P</variation>
    <location>
        <position position="504"/>
    </location>
</feature>
<feature type="mutagenesis site" description="Loss of cytotoxicity." evidence="11">
    <original>K</original>
    <variation>R</variation>
    <location>
        <position position="562"/>
    </location>
</feature>
<feature type="mutagenesis site" description="Loss of cytotoxicity." evidence="11">
    <original>K</original>
    <variation>R</variation>
    <location>
        <position position="687"/>
    </location>
</feature>
<feature type="sequence conflict" description="In Ref. 1; AAA21922." evidence="18" ref="1">
    <original>L</original>
    <variation>Y</variation>
    <location>
        <position position="240"/>
    </location>
</feature>
<feature type="sequence conflict" description="In Ref. 1; AAA21922." evidence="18" ref="1">
    <original>D</original>
    <variation>H</variation>
    <location>
        <position position="260"/>
    </location>
</feature>
<feature type="sequence conflict" description="In Ref. 1; AAA21922." evidence="18" ref="1">
    <original>E</original>
    <variation>A</variation>
    <location>
        <position position="336"/>
    </location>
</feature>
<feature type="sequence conflict" description="In Ref. 1; AAA21922." evidence="18" ref="1">
    <original>F</original>
    <variation>S</variation>
    <location>
        <position position="416"/>
    </location>
</feature>
<feature type="sequence conflict" description="In Ref. 1; AAA21922." evidence="18" ref="1">
    <original>F</original>
    <variation>S</variation>
    <location>
        <position position="439"/>
    </location>
</feature>
<feature type="sequence conflict" description="In Ref. 1; AAA21922." evidence="18" ref="1">
    <original>T</original>
    <variation>N</variation>
    <location>
        <position position="724"/>
    </location>
</feature>
<feature type="sequence conflict" description="In Ref. 1; AAA21922." ref="1">
    <original>RARLKRQFELQRGKVDKSLNNKVEEIIGKDGERITSQDIDNLFDKSGNKKTISPQELAGLIKNKGKSSSLMSSSRSSSMLTQKSGLSNDISRIISATSGFGSSGKALSASPLQTNNNFNSYANSLATTA</original>
    <variation>VHDLRDNLSYSEVKSTNHSIIKLKKLSVKMGSGLLRKTLIIFLIRVGTKRQFHLKSLPDLLRIKVSQVALCLLLVRQVCLHKSPVCQMILVVLFQQPVVLVHPVKRYPLRHCRPIITLTLTQIR</variation>
    <location>
        <begin position="927"/>
        <end position="1055"/>
    </location>
</feature>
<protein>
    <recommendedName>
        <fullName>Leukotoxin</fullName>
        <shortName>Lkt</shortName>
    </recommendedName>
</protein>
<proteinExistence type="evidence at protein level"/>
<comment type="function">
    <text evidence="5 7 12 13">Virulence factor that plays an important role in immune evasion. Lyses human lymphocytes and monocytes. Binds to the LFA-1 integrin on the surface of the host cell and to cholesterol-containing membranes, which probably results in large LtxA-LFA-1 clusters in lipid rafts. Also shows beta-hemolytic activity on certain types of growth media.</text>
</comment>
<comment type="subunit">
    <text evidence="7 8">Interacts specifically with the superoxide dismutase [Cu-Zn]. This interaction may protect LtxA from reactive oxygen species and reactive nitrogen species produced by host inflammatory cells during disease (PubMed:17635874). Interacts with the human leukocyte adhesion glycoprotein LFA-1 (ITGAL-ITGB2) (PubMed:17635865).</text>
</comment>
<comment type="subcellular location">
    <subcellularLocation>
        <location evidence="9">Cell outer membrane</location>
        <topology evidence="9">Peripheral membrane protein</topology>
        <orientation evidence="9">Extracellular side</orientation>
    </subcellularLocation>
    <subcellularLocation>
        <location evidence="4">Secreted</location>
    </subcellularLocation>
    <text evidence="4 6">Leukotoxin expressed by the rough, adherent, clinical isolate CU1000N is cell associated. However, smooth, nonadherent strains, including Y4, JP2 and CU1060N, secrete an abundance of leukotoxin into the culture supernatants during early stages of growth (PubMed:11035711). Secretion is inhibited by free iron (PubMed:17041062).</text>
</comment>
<comment type="induction">
    <text evidence="6 14">Levels of toxin expression vary greatly among strains. Highly leukotoxic strains (JP2-type strains) produce more LtxA protein and ltx mRNA than minimally leukotoxic strains (652-type strains). Variations are probably due to different types of promoters (PubMed:8300209). Expression is not affected by iron (PubMed:17041062).</text>
</comment>
<comment type="domain">
    <text evidence="1">The Gly-rich region is probably involved in binding calcium, which is required for target cell-binding or cytolytic activity.</text>
</comment>
<comment type="PTM">
    <text evidence="10 11">Acylated at Lys-562 and Lys-687 by LtxC. This modification is required for full activity. Isolated methyl esters contain palmitoyl and palmitolyl fatty acyl groups with smaller quantities of myristic and stearic fatty acids.</text>
</comment>
<comment type="disruption phenotype">
    <text evidence="5">Mutation completely abolishes the beta-hemolytic activity of A.actinomycetemcomitans.</text>
</comment>
<comment type="similarity">
    <text evidence="18">Belongs to the RTX prokaryotic toxin (TC 1.C.11) family.</text>
</comment>
<keyword id="KW-0106">Calcium</keyword>
<keyword id="KW-0998">Cell outer membrane</keyword>
<keyword id="KW-0175">Coiled coil</keyword>
<keyword id="KW-0204">Cytolysis</keyword>
<keyword id="KW-0354">Hemolysis</keyword>
<keyword id="KW-0472">Membrane</keyword>
<keyword id="KW-0677">Repeat</keyword>
<keyword id="KW-0964">Secreted</keyword>
<keyword id="KW-0800">Toxin</keyword>
<keyword id="KW-0843">Virulence</keyword>
<organism>
    <name type="scientific">Aggregatibacter actinomycetemcomitans</name>
    <name type="common">Actinobacillus actinomycetemcomitans</name>
    <name type="synonym">Haemophilus actinomycetemcomitans</name>
    <dbReference type="NCBI Taxonomy" id="714"/>
    <lineage>
        <taxon>Bacteria</taxon>
        <taxon>Pseudomonadati</taxon>
        <taxon>Pseudomonadota</taxon>
        <taxon>Gammaproteobacteria</taxon>
        <taxon>Pasteurellales</taxon>
        <taxon>Pasteurellaceae</taxon>
        <taxon>Aggregatibacter</taxon>
    </lineage>
</organism>